<accession>Q98RJ3</accession>
<proteinExistence type="inferred from homology"/>
<reference key="1">
    <citation type="journal article" date="2001" name="Nucleic Acids Res.">
        <title>The complete genome sequence of the murine respiratory pathogen Mycoplasma pulmonis.</title>
        <authorList>
            <person name="Chambaud I."/>
            <person name="Heilig R."/>
            <person name="Ferris S."/>
            <person name="Barbe V."/>
            <person name="Samson D."/>
            <person name="Galisson F."/>
            <person name="Moszer I."/>
            <person name="Dybvig K."/>
            <person name="Wroblewski H."/>
            <person name="Viari A."/>
            <person name="Rocha E.P.C."/>
            <person name="Blanchard A."/>
        </authorList>
    </citation>
    <scope>NUCLEOTIDE SEQUENCE [LARGE SCALE GENOMIC DNA]</scope>
    <source>
        <strain>UAB CTIP</strain>
    </source>
</reference>
<name>RSMA_MYCPU</name>
<comment type="function">
    <text evidence="1">Specifically dimethylates two adjacent adenosines (A1518 and A1519) in the loop of a conserved hairpin near the 3'-end of 16S rRNA in the 30S particle. May play a critical role in biogenesis of 30S subunits.</text>
</comment>
<comment type="catalytic activity">
    <reaction evidence="1">
        <text>adenosine(1518)/adenosine(1519) in 16S rRNA + 4 S-adenosyl-L-methionine = N(6)-dimethyladenosine(1518)/N(6)-dimethyladenosine(1519) in 16S rRNA + 4 S-adenosyl-L-homocysteine + 4 H(+)</text>
        <dbReference type="Rhea" id="RHEA:19609"/>
        <dbReference type="Rhea" id="RHEA-COMP:10232"/>
        <dbReference type="Rhea" id="RHEA-COMP:10233"/>
        <dbReference type="ChEBI" id="CHEBI:15378"/>
        <dbReference type="ChEBI" id="CHEBI:57856"/>
        <dbReference type="ChEBI" id="CHEBI:59789"/>
        <dbReference type="ChEBI" id="CHEBI:74411"/>
        <dbReference type="ChEBI" id="CHEBI:74493"/>
        <dbReference type="EC" id="2.1.1.182"/>
    </reaction>
</comment>
<comment type="subcellular location">
    <subcellularLocation>
        <location evidence="1">Cytoplasm</location>
    </subcellularLocation>
</comment>
<comment type="similarity">
    <text evidence="1">Belongs to the class I-like SAM-binding methyltransferase superfamily. rRNA adenine N(6)-methyltransferase family. RsmA subfamily.</text>
</comment>
<protein>
    <recommendedName>
        <fullName evidence="1">Ribosomal RNA small subunit methyltransferase A</fullName>
        <ecNumber evidence="1">2.1.1.182</ecNumber>
    </recommendedName>
    <alternativeName>
        <fullName evidence="1">16S rRNA (adenine(1518)-N(6)/adenine(1519)-N(6))-dimethyltransferase</fullName>
    </alternativeName>
    <alternativeName>
        <fullName evidence="1">16S rRNA dimethyladenosine transferase</fullName>
    </alternativeName>
    <alternativeName>
        <fullName evidence="1">16S rRNA dimethylase</fullName>
    </alternativeName>
    <alternativeName>
        <fullName evidence="1">S-adenosylmethionine-6-N', N'-adenosyl(rRNA) dimethyltransferase</fullName>
    </alternativeName>
</protein>
<organism>
    <name type="scientific">Mycoplasmopsis pulmonis (strain UAB CTIP)</name>
    <name type="common">Mycoplasma pulmonis</name>
    <dbReference type="NCBI Taxonomy" id="272635"/>
    <lineage>
        <taxon>Bacteria</taxon>
        <taxon>Bacillati</taxon>
        <taxon>Mycoplasmatota</taxon>
        <taxon>Mycoplasmoidales</taxon>
        <taxon>Metamycoplasmataceae</taxon>
        <taxon>Mycoplasmopsis</taxon>
    </lineage>
</organism>
<evidence type="ECO:0000255" key="1">
    <source>
        <dbReference type="HAMAP-Rule" id="MF_00607"/>
    </source>
</evidence>
<sequence length="252" mass="29711">MRAKKRFGQNFLIDQNIINKIVDSSEVENRNIIEIGPGKGALTKILVKKANKVLAYEIDQDMVNILNQQISSKNFVLINKDFLKEEFDKSQNYNIVANIPYYITSDIIFKIIENHQIFDQATLMVQKEVALRILAKQNDSEFSKLSLSVQFFFDVFLICDVSKNSFRPIPKVDSAVIKLVKKKNKDFSLWKEYFEFLKIAFSSRRKTLLNNLKYFFNEQKILKFFELKNYDPKVRAQNIKNEDFYALFLELR</sequence>
<dbReference type="EC" id="2.1.1.182" evidence="1"/>
<dbReference type="EMBL" id="AL445563">
    <property type="protein sequence ID" value="CAC13188.1"/>
    <property type="molecule type" value="Genomic_DNA"/>
</dbReference>
<dbReference type="PIR" id="G90513">
    <property type="entry name" value="G90513"/>
</dbReference>
<dbReference type="RefSeq" id="WP_010924819.1">
    <property type="nucleotide sequence ID" value="NC_002771.1"/>
</dbReference>
<dbReference type="SMR" id="Q98RJ3"/>
<dbReference type="STRING" id="272635.gene:17576594"/>
<dbReference type="KEGG" id="mpu:MYPU_0150"/>
<dbReference type="eggNOG" id="COG0030">
    <property type="taxonomic scope" value="Bacteria"/>
</dbReference>
<dbReference type="HOGENOM" id="CLU_041220_0_0_14"/>
<dbReference type="BioCyc" id="MPUL272635:G1GT6-15-MONOMER"/>
<dbReference type="Proteomes" id="UP000000528">
    <property type="component" value="Chromosome"/>
</dbReference>
<dbReference type="GO" id="GO:0005829">
    <property type="term" value="C:cytosol"/>
    <property type="evidence" value="ECO:0007669"/>
    <property type="project" value="TreeGrafter"/>
</dbReference>
<dbReference type="GO" id="GO:0052908">
    <property type="term" value="F:16S rRNA (adenine(1518)-N(6)/adenine(1519)-N(6))-dimethyltransferase activity"/>
    <property type="evidence" value="ECO:0007669"/>
    <property type="project" value="UniProtKB-EC"/>
</dbReference>
<dbReference type="GO" id="GO:0003723">
    <property type="term" value="F:RNA binding"/>
    <property type="evidence" value="ECO:0007669"/>
    <property type="project" value="UniProtKB-KW"/>
</dbReference>
<dbReference type="CDD" id="cd02440">
    <property type="entry name" value="AdoMet_MTases"/>
    <property type="match status" value="1"/>
</dbReference>
<dbReference type="FunFam" id="3.40.50.150:FF:000023">
    <property type="entry name" value="Ribosomal RNA small subunit methyltransferase A"/>
    <property type="match status" value="1"/>
</dbReference>
<dbReference type="Gene3D" id="1.10.8.100">
    <property type="entry name" value="Ribosomal RNA adenine dimethylase-like, domain 2"/>
    <property type="match status" value="1"/>
</dbReference>
<dbReference type="Gene3D" id="3.40.50.150">
    <property type="entry name" value="Vaccinia Virus protein VP39"/>
    <property type="match status" value="1"/>
</dbReference>
<dbReference type="HAMAP" id="MF_00607">
    <property type="entry name" value="16SrRNA_methyltr_A"/>
    <property type="match status" value="1"/>
</dbReference>
<dbReference type="InterPro" id="IPR001737">
    <property type="entry name" value="KsgA/Erm"/>
</dbReference>
<dbReference type="InterPro" id="IPR023165">
    <property type="entry name" value="rRNA_Ade_diMease-like_C"/>
</dbReference>
<dbReference type="InterPro" id="IPR020596">
    <property type="entry name" value="rRNA_Ade_Mease_Trfase_CS"/>
</dbReference>
<dbReference type="InterPro" id="IPR020598">
    <property type="entry name" value="rRNA_Ade_methylase_Trfase_N"/>
</dbReference>
<dbReference type="InterPro" id="IPR011530">
    <property type="entry name" value="rRNA_adenine_dimethylase"/>
</dbReference>
<dbReference type="InterPro" id="IPR029063">
    <property type="entry name" value="SAM-dependent_MTases_sf"/>
</dbReference>
<dbReference type="NCBIfam" id="TIGR00755">
    <property type="entry name" value="ksgA"/>
    <property type="match status" value="1"/>
</dbReference>
<dbReference type="PANTHER" id="PTHR11727">
    <property type="entry name" value="DIMETHYLADENOSINE TRANSFERASE"/>
    <property type="match status" value="1"/>
</dbReference>
<dbReference type="PANTHER" id="PTHR11727:SF7">
    <property type="entry name" value="DIMETHYLADENOSINE TRANSFERASE-RELATED"/>
    <property type="match status" value="1"/>
</dbReference>
<dbReference type="Pfam" id="PF00398">
    <property type="entry name" value="RrnaAD"/>
    <property type="match status" value="1"/>
</dbReference>
<dbReference type="SMART" id="SM00650">
    <property type="entry name" value="rADc"/>
    <property type="match status" value="1"/>
</dbReference>
<dbReference type="SUPFAM" id="SSF53335">
    <property type="entry name" value="S-adenosyl-L-methionine-dependent methyltransferases"/>
    <property type="match status" value="1"/>
</dbReference>
<dbReference type="PROSITE" id="PS01131">
    <property type="entry name" value="RRNA_A_DIMETH"/>
    <property type="match status" value="1"/>
</dbReference>
<dbReference type="PROSITE" id="PS51689">
    <property type="entry name" value="SAM_RNA_A_N6_MT"/>
    <property type="match status" value="1"/>
</dbReference>
<gene>
    <name evidence="1" type="primary">rsmA</name>
    <name evidence="1" type="synonym">ksgA</name>
    <name type="ordered locus">MYPU_0150</name>
</gene>
<feature type="chain" id="PRO_0000101566" description="Ribosomal RNA small subunit methyltransferase A">
    <location>
        <begin position="1"/>
        <end position="252"/>
    </location>
</feature>
<feature type="binding site" evidence="1">
    <location>
        <position position="10"/>
    </location>
    <ligand>
        <name>S-adenosyl-L-methionine</name>
        <dbReference type="ChEBI" id="CHEBI:59789"/>
    </ligand>
</feature>
<feature type="binding site" evidence="1">
    <location>
        <position position="12"/>
    </location>
    <ligand>
        <name>S-adenosyl-L-methionine</name>
        <dbReference type="ChEBI" id="CHEBI:59789"/>
    </ligand>
</feature>
<feature type="binding site" evidence="1">
    <location>
        <position position="36"/>
    </location>
    <ligand>
        <name>S-adenosyl-L-methionine</name>
        <dbReference type="ChEBI" id="CHEBI:59789"/>
    </ligand>
</feature>
<feature type="binding site" evidence="1">
    <location>
        <position position="57"/>
    </location>
    <ligand>
        <name>S-adenosyl-L-methionine</name>
        <dbReference type="ChEBI" id="CHEBI:59789"/>
    </ligand>
</feature>
<feature type="binding site" evidence="1">
    <location>
        <position position="81"/>
    </location>
    <ligand>
        <name>S-adenosyl-L-methionine</name>
        <dbReference type="ChEBI" id="CHEBI:59789"/>
    </ligand>
</feature>
<feature type="binding site" evidence="1">
    <location>
        <position position="98"/>
    </location>
    <ligand>
        <name>S-adenosyl-L-methionine</name>
        <dbReference type="ChEBI" id="CHEBI:59789"/>
    </ligand>
</feature>
<keyword id="KW-0963">Cytoplasm</keyword>
<keyword id="KW-0489">Methyltransferase</keyword>
<keyword id="KW-1185">Reference proteome</keyword>
<keyword id="KW-0694">RNA-binding</keyword>
<keyword id="KW-0698">rRNA processing</keyword>
<keyword id="KW-0949">S-adenosyl-L-methionine</keyword>
<keyword id="KW-0808">Transferase</keyword>